<geneLocation type="chloroplast"/>
<protein>
    <recommendedName>
        <fullName evidence="1">Large ribosomal subunit protein uL14c</fullName>
    </recommendedName>
    <alternativeName>
        <fullName evidence="2">50S ribosomal protein L14, chloroplastic</fullName>
    </alternativeName>
</protein>
<accession>Q2PMP9</accession>
<keyword id="KW-0150">Chloroplast</keyword>
<keyword id="KW-0934">Plastid</keyword>
<keyword id="KW-1185">Reference proteome</keyword>
<keyword id="KW-0687">Ribonucleoprotein</keyword>
<keyword id="KW-0689">Ribosomal protein</keyword>
<keyword id="KW-0694">RNA-binding</keyword>
<keyword id="KW-0699">rRNA-binding</keyword>
<reference key="1">
    <citation type="journal article" date="2005" name="Plant Mol. Biol.">
        <title>Complete chloroplast genome sequence of Glycine max and comparative analyses with other legume genomes.</title>
        <authorList>
            <person name="Saski C."/>
            <person name="Lee S.-B."/>
            <person name="Daniell H."/>
            <person name="Wood T.C."/>
            <person name="Tomkins J."/>
            <person name="Kim H.-G."/>
            <person name="Jansen R.K."/>
        </authorList>
    </citation>
    <scope>NUCLEOTIDE SEQUENCE [LARGE SCALE GENOMIC DNA]</scope>
    <source>
        <strain>cv. PI 437654</strain>
    </source>
</reference>
<gene>
    <name evidence="1" type="primary">rpl14</name>
</gene>
<proteinExistence type="inferred from homology"/>
<name>RK14_SOYBN</name>
<dbReference type="EMBL" id="DQ317523">
    <property type="protein sequence ID" value="ABC25159.1"/>
    <property type="molecule type" value="Genomic_DNA"/>
</dbReference>
<dbReference type="RefSeq" id="YP_538801.1">
    <property type="nucleotide sequence ID" value="NC_007942.1"/>
</dbReference>
<dbReference type="SMR" id="Q2PMP9"/>
<dbReference type="FunCoup" id="Q2PMP9">
    <property type="interactions" value="811"/>
</dbReference>
<dbReference type="STRING" id="3847.Q2PMP9"/>
<dbReference type="GeneID" id="3989333"/>
<dbReference type="KEGG" id="gmx:3989333"/>
<dbReference type="InParanoid" id="Q2PMP9"/>
<dbReference type="Proteomes" id="UP000008827">
    <property type="component" value="Chloroplast"/>
</dbReference>
<dbReference type="GO" id="GO:0009507">
    <property type="term" value="C:chloroplast"/>
    <property type="evidence" value="ECO:0007669"/>
    <property type="project" value="UniProtKB-SubCell"/>
</dbReference>
<dbReference type="GO" id="GO:0022625">
    <property type="term" value="C:cytosolic large ribosomal subunit"/>
    <property type="evidence" value="ECO:0000318"/>
    <property type="project" value="GO_Central"/>
</dbReference>
<dbReference type="GO" id="GO:0070180">
    <property type="term" value="F:large ribosomal subunit rRNA binding"/>
    <property type="evidence" value="ECO:0000318"/>
    <property type="project" value="GO_Central"/>
</dbReference>
<dbReference type="GO" id="GO:0003735">
    <property type="term" value="F:structural constituent of ribosome"/>
    <property type="evidence" value="ECO:0000318"/>
    <property type="project" value="GO_Central"/>
</dbReference>
<dbReference type="GO" id="GO:0006412">
    <property type="term" value="P:translation"/>
    <property type="evidence" value="ECO:0007669"/>
    <property type="project" value="UniProtKB-UniRule"/>
</dbReference>
<dbReference type="CDD" id="cd00337">
    <property type="entry name" value="Ribosomal_uL14"/>
    <property type="match status" value="1"/>
</dbReference>
<dbReference type="FunFam" id="2.40.150.20:FF:000002">
    <property type="entry name" value="50S ribosomal protein L14, chloroplastic"/>
    <property type="match status" value="1"/>
</dbReference>
<dbReference type="Gene3D" id="2.40.150.20">
    <property type="entry name" value="Ribosomal protein L14"/>
    <property type="match status" value="1"/>
</dbReference>
<dbReference type="HAMAP" id="MF_01367">
    <property type="entry name" value="Ribosomal_uL14"/>
    <property type="match status" value="1"/>
</dbReference>
<dbReference type="InterPro" id="IPR000218">
    <property type="entry name" value="Ribosomal_uL14"/>
</dbReference>
<dbReference type="InterPro" id="IPR005745">
    <property type="entry name" value="Ribosomal_uL14_bac-type"/>
</dbReference>
<dbReference type="InterPro" id="IPR019972">
    <property type="entry name" value="Ribosomal_uL14_CS"/>
</dbReference>
<dbReference type="InterPro" id="IPR036853">
    <property type="entry name" value="Ribosomal_uL14_sf"/>
</dbReference>
<dbReference type="NCBIfam" id="TIGR01067">
    <property type="entry name" value="rplN_bact"/>
    <property type="match status" value="1"/>
</dbReference>
<dbReference type="PANTHER" id="PTHR11761">
    <property type="entry name" value="50S/60S RIBOSOMAL PROTEIN L14/L23"/>
    <property type="match status" value="1"/>
</dbReference>
<dbReference type="PANTHER" id="PTHR11761:SF27">
    <property type="entry name" value="LARGE RIBOSOMAL SUBUNIT PROTEIN UL14C"/>
    <property type="match status" value="1"/>
</dbReference>
<dbReference type="Pfam" id="PF00238">
    <property type="entry name" value="Ribosomal_L14"/>
    <property type="match status" value="1"/>
</dbReference>
<dbReference type="SMART" id="SM01374">
    <property type="entry name" value="Ribosomal_L14"/>
    <property type="match status" value="1"/>
</dbReference>
<dbReference type="SUPFAM" id="SSF50193">
    <property type="entry name" value="Ribosomal protein L14"/>
    <property type="match status" value="1"/>
</dbReference>
<dbReference type="PROSITE" id="PS00049">
    <property type="entry name" value="RIBOSOMAL_L14"/>
    <property type="match status" value="1"/>
</dbReference>
<organism>
    <name type="scientific">Glycine max</name>
    <name type="common">Soybean</name>
    <name type="synonym">Glycine hispida</name>
    <dbReference type="NCBI Taxonomy" id="3847"/>
    <lineage>
        <taxon>Eukaryota</taxon>
        <taxon>Viridiplantae</taxon>
        <taxon>Streptophyta</taxon>
        <taxon>Embryophyta</taxon>
        <taxon>Tracheophyta</taxon>
        <taxon>Spermatophyta</taxon>
        <taxon>Magnoliopsida</taxon>
        <taxon>eudicotyledons</taxon>
        <taxon>Gunneridae</taxon>
        <taxon>Pentapetalae</taxon>
        <taxon>rosids</taxon>
        <taxon>fabids</taxon>
        <taxon>Fabales</taxon>
        <taxon>Fabaceae</taxon>
        <taxon>Papilionoideae</taxon>
        <taxon>50 kb inversion clade</taxon>
        <taxon>NPAAA clade</taxon>
        <taxon>indigoferoid/millettioid clade</taxon>
        <taxon>Phaseoleae</taxon>
        <taxon>Glycine</taxon>
        <taxon>Glycine subgen. Soja</taxon>
    </lineage>
</organism>
<evidence type="ECO:0000255" key="1">
    <source>
        <dbReference type="HAMAP-Rule" id="MF_01367"/>
    </source>
</evidence>
<evidence type="ECO:0000305" key="2"/>
<sequence length="122" mass="13575">MIQPQTHLNVADNSGARELMCIRILGASNRRYAYIGDIVVAVIKQAVPNTNLERSEVIRAVIVRTCKELKRSNGIIIQYDDNAAVVIDQEGNPKGTRIFCAIARELRQLNFTKIVSLAPEVL</sequence>
<feature type="chain" id="PRO_0000276345" description="Large ribosomal subunit protein uL14c">
    <location>
        <begin position="1"/>
        <end position="122"/>
    </location>
</feature>
<comment type="function">
    <text evidence="1">Binds to 23S rRNA.</text>
</comment>
<comment type="subunit">
    <text evidence="1">Part of the 50S ribosomal subunit.</text>
</comment>
<comment type="subcellular location">
    <subcellularLocation>
        <location>Plastid</location>
        <location>Chloroplast</location>
    </subcellularLocation>
</comment>
<comment type="similarity">
    <text evidence="1">Belongs to the universal ribosomal protein uL14 family.</text>
</comment>